<gene>
    <name evidence="2" type="primary">lfhA</name>
    <name evidence="3" type="synonym">fhiA</name>
    <name type="ordered locus">b0229</name>
    <name type="ordered locus">JW5811</name>
</gene>
<evidence type="ECO:0000255" key="1"/>
<evidence type="ECO:0000303" key="2">
    <source>
    </source>
</evidence>
<evidence type="ECO:0000303" key="3">
    <source>
    </source>
</evidence>
<evidence type="ECO:0000305" key="4"/>
<evidence type="ECO:0000305" key="5">
    <source>
    </source>
</evidence>
<reference key="1">
    <citation type="journal article" date="1995" name="Mutat. Res.">
        <title>dinP, a new gene in Escherichia coli, whose product shows similarities to UmuC and its homologues.</title>
        <authorList>
            <person name="Ohmori H."/>
            <person name="Hatada E."/>
            <person name="Qiao Y."/>
            <person name="Tsuji M."/>
            <person name="Fukuda R."/>
        </authorList>
    </citation>
    <scope>NUCLEOTIDE SEQUENCE [GENOMIC DNA]</scope>
    <source>
        <strain>K12 / W3110 / ATCC 27325 / DSM 5911</strain>
    </source>
</reference>
<reference key="2">
    <citation type="submission" date="1996-02" db="EMBL/GenBank/DDBJ databases">
        <title>Systematic sequencing of the Escherichia coli genome: analysis of the 4.0 - 6.0 min (189,987 - 281,416bp) region.</title>
        <authorList>
            <person name="Takemoto K."/>
            <person name="Mori H."/>
            <person name="Murayama N."/>
            <person name="Kataoka K."/>
            <person name="Yano M."/>
            <person name="Itoh T."/>
            <person name="Yamamoto Y."/>
            <person name="Inokuchi H."/>
            <person name="Miki T."/>
            <person name="Hatada E."/>
            <person name="Fukuda R."/>
            <person name="Ichihara S."/>
            <person name="Mizuno T."/>
            <person name="Makino K."/>
            <person name="Nakata A."/>
            <person name="Yura T."/>
            <person name="Sampei G."/>
            <person name="Mizobuchi K."/>
        </authorList>
    </citation>
    <scope>NUCLEOTIDE SEQUENCE [LARGE SCALE GENOMIC DNA]</scope>
    <source>
        <strain>K12 / W3110 / ATCC 27325 / DSM 5911</strain>
    </source>
</reference>
<reference key="3">
    <citation type="submission" date="1997-01" db="EMBL/GenBank/DDBJ databases">
        <title>Sequence of minutes 4-25 of Escherichia coli.</title>
        <authorList>
            <person name="Chung E."/>
            <person name="Allen E."/>
            <person name="Araujo R."/>
            <person name="Aparicio A.M."/>
            <person name="Davis K."/>
            <person name="Duncan M."/>
            <person name="Federspiel N."/>
            <person name="Hyman R."/>
            <person name="Kalman S."/>
            <person name="Komp C."/>
            <person name="Kurdi O."/>
            <person name="Lew H."/>
            <person name="Lin D."/>
            <person name="Namath A."/>
            <person name="Oefner P."/>
            <person name="Roberts D."/>
            <person name="Schramm S."/>
            <person name="Davis R.W."/>
        </authorList>
    </citation>
    <scope>NUCLEOTIDE SEQUENCE [LARGE SCALE GENOMIC DNA]</scope>
    <source>
        <strain>K12 / MG1655 / ATCC 47076</strain>
    </source>
</reference>
<reference key="4">
    <citation type="journal article" date="1997" name="Science">
        <title>The complete genome sequence of Escherichia coli K-12.</title>
        <authorList>
            <person name="Blattner F.R."/>
            <person name="Plunkett G. III"/>
            <person name="Bloch C.A."/>
            <person name="Perna N.T."/>
            <person name="Burland V."/>
            <person name="Riley M."/>
            <person name="Collado-Vides J."/>
            <person name="Glasner J.D."/>
            <person name="Rode C.K."/>
            <person name="Mayhew G.F."/>
            <person name="Gregor J."/>
            <person name="Davis N.W."/>
            <person name="Kirkpatrick H.A."/>
            <person name="Goeden M.A."/>
            <person name="Rose D.J."/>
            <person name="Mau B."/>
            <person name="Shao Y."/>
        </authorList>
    </citation>
    <scope>NUCLEOTIDE SEQUENCE [LARGE SCALE GENOMIC DNA]</scope>
    <source>
        <strain>K12 / MG1655 / ATCC 47076</strain>
    </source>
</reference>
<reference key="5">
    <citation type="journal article" date="2006" name="Mol. Syst. Biol.">
        <title>Highly accurate genome sequences of Escherichia coli K-12 strains MG1655 and W3110.</title>
        <authorList>
            <person name="Hayashi K."/>
            <person name="Morooka N."/>
            <person name="Yamamoto Y."/>
            <person name="Fujita K."/>
            <person name="Isono K."/>
            <person name="Choi S."/>
            <person name="Ohtsubo E."/>
            <person name="Baba T."/>
            <person name="Wanner B.L."/>
            <person name="Mori H."/>
            <person name="Horiuchi T."/>
        </authorList>
    </citation>
    <scope>NUCLEOTIDE SEQUENCE [LARGE SCALE GENOMIC DNA]</scope>
    <source>
        <strain>K12 / W3110 / ATCC 27325 / DSM 5911</strain>
    </source>
</reference>
<reference key="6">
    <citation type="journal article" date="2005" name="J. Bacteriol.">
        <title>The Flag-2 locus, an ancestral gene cluster, is potentially associated with a novel flagellar system from Escherichia coli.</title>
        <authorList>
            <person name="Ren C.-P."/>
            <person name="Beatson S.A."/>
            <person name="Parkhill J."/>
            <person name="Pallen M.J."/>
        </authorList>
    </citation>
    <scope>IDENTIFICATION AS A PSEUDOGENE</scope>
    <source>
        <strain>K12</strain>
    </source>
</reference>
<sequence>MLSRSDLLTLLTINFIVVTKGAERISEVSARFTLDAMPGKQMAIDADLNAGLINQAQAQTRRKDVASEADFYGAMDGASKFVRGDAIAGMMILAINLIGGVCIGIFKYNLSADAAFQQYVLMTIGDGLVAQIPSLLLSTAAAIIVTRVSDNGDIAHDVRNQLLASPSVLYTATGIMFVLAVVPGMPHLPFLLFSALLGFTGWRMSKQPLAAEAEEKSLETLTRTITETSEQQVSWETIPLIEPISLSLGYKLVALVDKAQGNPLTQRIRGVRQVISDGNGVLLPEIRIRENFRLKPSQYAIFINGIKADEADIPADKLMALPSSETYGEIDGVQGNDPAYGMPVTWIQAAQKAKALNMGYQVIDSASVIATHVNKIVRSYIPDLFNYDDITQLHNRLSSTAPRLAEDLSAALNYSQLLKVYRALLTEGVSLRDIVTIATVLVASSTVTKDHILLAADVRLALRRSITHPFVRKQELTVYTLNNELENLLTNVVNQAQQGGKVMLDSVPVDPNMLNQFQSTMPQVKEQMKAAGKDPVLLVPPQLRPLLARYARLFAPGLHVLSYNEVPDELELKIMGALM</sequence>
<organism>
    <name type="scientific">Escherichia coli (strain K12)</name>
    <dbReference type="NCBI Taxonomy" id="83333"/>
    <lineage>
        <taxon>Bacteria</taxon>
        <taxon>Pseudomonadati</taxon>
        <taxon>Pseudomonadota</taxon>
        <taxon>Gammaproteobacteria</taxon>
        <taxon>Enterobacterales</taxon>
        <taxon>Enterobacteriaceae</taxon>
        <taxon>Escherichia</taxon>
    </lineage>
</organism>
<protein>
    <recommendedName>
        <fullName evidence="4">Putative truncated flagellar export/assembly protein LfhA</fullName>
    </recommendedName>
</protein>
<comment type="subcellular location">
    <subcellularLocation>
        <location evidence="4">Cell inner membrane</location>
        <topology evidence="1">Multi-pass membrane protein</topology>
    </subcellularLocation>
</comment>
<comment type="similarity">
    <text evidence="4">Belongs to the FHIPEP (flagella/HR/invasion proteins export pore) family.</text>
</comment>
<comment type="caution">
    <text evidence="5">Could be the product of a pseudogene. Promoterless gene that is a remnant of an ancestral flagellar gene cluster, Flag-2. The N-terminus is shorter than in orthologs.</text>
</comment>
<dbReference type="EMBL" id="D38582">
    <property type="protein sequence ID" value="BAA07591.1"/>
    <property type="molecule type" value="Genomic_DNA"/>
</dbReference>
<dbReference type="EMBL" id="U70214">
    <property type="protein sequence ID" value="AAB08649.1"/>
    <property type="molecule type" value="Genomic_DNA"/>
</dbReference>
<dbReference type="EMBL" id="U00096">
    <property type="status" value="NOT_ANNOTATED_CDS"/>
    <property type="molecule type" value="Genomic_DNA"/>
</dbReference>
<dbReference type="EMBL" id="AP009048">
    <property type="status" value="NOT_ANNOTATED_CDS"/>
    <property type="molecule type" value="Genomic_DNA"/>
</dbReference>
<dbReference type="PIR" id="F64747">
    <property type="entry name" value="F64747"/>
</dbReference>
<dbReference type="SMR" id="Q47153"/>
<dbReference type="DIP" id="DIP-9600N"/>
<dbReference type="FunCoup" id="Q47153">
    <property type="interactions" value="88"/>
</dbReference>
<dbReference type="IntAct" id="Q47153">
    <property type="interactions" value="6"/>
</dbReference>
<dbReference type="KEGG" id="ecoc:C3026_01085"/>
<dbReference type="KEGG" id="ecoc:C3026_23825"/>
<dbReference type="PATRIC" id="fig|83333.103.peg.980"/>
<dbReference type="EchoBASE" id="EB2938"/>
<dbReference type="InParanoid" id="Q47153"/>
<dbReference type="OrthoDB" id="9759185at2"/>
<dbReference type="PhylomeDB" id="Q47153"/>
<dbReference type="Proteomes" id="UP000000625">
    <property type="component" value="Chromosome"/>
</dbReference>
<dbReference type="GO" id="GO:0005886">
    <property type="term" value="C:plasma membrane"/>
    <property type="evidence" value="ECO:0000318"/>
    <property type="project" value="GO_Central"/>
</dbReference>
<dbReference type="GO" id="GO:0044780">
    <property type="term" value="P:bacterial-type flagellum assembly"/>
    <property type="evidence" value="ECO:0000318"/>
    <property type="project" value="GO_Central"/>
</dbReference>
<dbReference type="GO" id="GO:0009306">
    <property type="term" value="P:protein secretion"/>
    <property type="evidence" value="ECO:0007669"/>
    <property type="project" value="InterPro"/>
</dbReference>
<dbReference type="Gene3D" id="3.40.30.60">
    <property type="entry name" value="FHIPEP family, domain 1"/>
    <property type="match status" value="1"/>
</dbReference>
<dbReference type="Gene3D" id="1.10.8.540">
    <property type="entry name" value="FHIPEP family, domain 3"/>
    <property type="match status" value="1"/>
</dbReference>
<dbReference type="Gene3D" id="3.40.50.12790">
    <property type="entry name" value="FHIPEP family, domain 4"/>
    <property type="match status" value="1"/>
</dbReference>
<dbReference type="InterPro" id="IPR042194">
    <property type="entry name" value="FHIPEP_1"/>
</dbReference>
<dbReference type="InterPro" id="IPR042193">
    <property type="entry name" value="FHIPEP_3"/>
</dbReference>
<dbReference type="InterPro" id="IPR042196">
    <property type="entry name" value="FHIPEP_4"/>
</dbReference>
<dbReference type="InterPro" id="IPR025505">
    <property type="entry name" value="FHIPEP_CS"/>
</dbReference>
<dbReference type="InterPro" id="IPR001712">
    <property type="entry name" value="T3SS_FHIPEP"/>
</dbReference>
<dbReference type="PANTHER" id="PTHR30161:SF1">
    <property type="entry name" value="FLAGELLAR BIOSYNTHESIS PROTEIN FLHA-RELATED"/>
    <property type="match status" value="1"/>
</dbReference>
<dbReference type="PANTHER" id="PTHR30161">
    <property type="entry name" value="FLAGELLAR EXPORT PROTEIN, MEMBRANE FLHA SUBUNIT-RELATED"/>
    <property type="match status" value="1"/>
</dbReference>
<dbReference type="Pfam" id="PF00771">
    <property type="entry name" value="FHIPEP"/>
    <property type="match status" value="1"/>
</dbReference>
<dbReference type="PRINTS" id="PR00949">
    <property type="entry name" value="TYPE3IMAPROT"/>
</dbReference>
<dbReference type="PROSITE" id="PS00994">
    <property type="entry name" value="FHIPEP"/>
    <property type="match status" value="1"/>
</dbReference>
<feature type="chain" id="PRO_0000190008" description="Putative truncated flagellar export/assembly protein LfhA">
    <location>
        <begin position="1"/>
        <end position="579"/>
    </location>
</feature>
<feature type="transmembrane region" description="Helical" evidence="1">
    <location>
        <begin position="86"/>
        <end position="106"/>
    </location>
</feature>
<feature type="transmembrane region" description="Helical" evidence="1">
    <location>
        <begin position="124"/>
        <end position="144"/>
    </location>
</feature>
<feature type="transmembrane region" description="Helical" evidence="1">
    <location>
        <begin position="177"/>
        <end position="197"/>
    </location>
</feature>
<keyword id="KW-0997">Cell inner membrane</keyword>
<keyword id="KW-1003">Cell membrane</keyword>
<keyword id="KW-0472">Membrane</keyword>
<keyword id="KW-1185">Reference proteome</keyword>
<keyword id="KW-0812">Transmembrane</keyword>
<keyword id="KW-1133">Transmembrane helix</keyword>
<proteinExistence type="uncertain"/>
<accession>Q47153</accession>
<accession>Q47681</accession>
<name>LFHA_ECOLI</name>